<comment type="function">
    <text evidence="1">Catalyzes the transfer of a phosphate group to glutamate to form L-glutamate 5-phosphate.</text>
</comment>
<comment type="catalytic activity">
    <reaction evidence="1">
        <text>L-glutamate + ATP = L-glutamyl 5-phosphate + ADP</text>
        <dbReference type="Rhea" id="RHEA:14877"/>
        <dbReference type="ChEBI" id="CHEBI:29985"/>
        <dbReference type="ChEBI" id="CHEBI:30616"/>
        <dbReference type="ChEBI" id="CHEBI:58274"/>
        <dbReference type="ChEBI" id="CHEBI:456216"/>
        <dbReference type="EC" id="2.7.2.11"/>
    </reaction>
</comment>
<comment type="pathway">
    <text evidence="1">Amino-acid biosynthesis; L-proline biosynthesis; L-glutamate 5-semialdehyde from L-glutamate: step 1/2.</text>
</comment>
<comment type="subcellular location">
    <subcellularLocation>
        <location evidence="1">Cytoplasm</location>
    </subcellularLocation>
</comment>
<comment type="similarity">
    <text evidence="1">Belongs to the glutamate 5-kinase family.</text>
</comment>
<proteinExistence type="inferred from homology"/>
<name>PROB_STRPQ</name>
<organism>
    <name type="scientific">Streptococcus pyogenes serotype M3 (strain SSI-1)</name>
    <dbReference type="NCBI Taxonomy" id="193567"/>
    <lineage>
        <taxon>Bacteria</taxon>
        <taxon>Bacillati</taxon>
        <taxon>Bacillota</taxon>
        <taxon>Bacilli</taxon>
        <taxon>Lactobacillales</taxon>
        <taxon>Streptococcaceae</taxon>
        <taxon>Streptococcus</taxon>
    </lineage>
</organism>
<feature type="chain" id="PRO_0000411449" description="Glutamate 5-kinase">
    <location>
        <begin position="1"/>
        <end position="273"/>
    </location>
</feature>
<feature type="binding site" evidence="1">
    <location>
        <position position="15"/>
    </location>
    <ligand>
        <name>ATP</name>
        <dbReference type="ChEBI" id="CHEBI:30616"/>
    </ligand>
</feature>
<feature type="binding site" evidence="1">
    <location>
        <position position="55"/>
    </location>
    <ligand>
        <name>substrate</name>
    </ligand>
</feature>
<feature type="binding site" evidence="1">
    <location>
        <position position="142"/>
    </location>
    <ligand>
        <name>substrate</name>
    </ligand>
</feature>
<feature type="binding site" evidence="1">
    <location>
        <position position="158"/>
    </location>
    <ligand>
        <name>substrate</name>
    </ligand>
</feature>
<feature type="binding site" evidence="1">
    <location>
        <begin position="178"/>
        <end position="179"/>
    </location>
    <ligand>
        <name>ATP</name>
        <dbReference type="ChEBI" id="CHEBI:30616"/>
    </ligand>
</feature>
<feature type="binding site" evidence="1">
    <location>
        <begin position="220"/>
        <end position="226"/>
    </location>
    <ligand>
        <name>ATP</name>
        <dbReference type="ChEBI" id="CHEBI:30616"/>
    </ligand>
</feature>
<reference key="1">
    <citation type="journal article" date="2003" name="Genome Res.">
        <title>Genome sequence of an M3 strain of Streptococcus pyogenes reveals a large-scale genomic rearrangement in invasive strains and new insights into phage evolution.</title>
        <authorList>
            <person name="Nakagawa I."/>
            <person name="Kurokawa K."/>
            <person name="Yamashita A."/>
            <person name="Nakata M."/>
            <person name="Tomiyasu Y."/>
            <person name="Okahashi N."/>
            <person name="Kawabata S."/>
            <person name="Yamazaki K."/>
            <person name="Shiba T."/>
            <person name="Yasunaga T."/>
            <person name="Hayashi H."/>
            <person name="Hattori M."/>
            <person name="Hamada S."/>
        </authorList>
    </citation>
    <scope>NUCLEOTIDE SEQUENCE [LARGE SCALE GENOMIC DNA]</scope>
    <source>
        <strain>SSI-1</strain>
    </source>
</reference>
<evidence type="ECO:0000255" key="1">
    <source>
        <dbReference type="HAMAP-Rule" id="MF_00456"/>
    </source>
</evidence>
<dbReference type="EC" id="2.7.2.11" evidence="1"/>
<dbReference type="EMBL" id="BA000034">
    <property type="protein sequence ID" value="BAC63552.1"/>
    <property type="molecule type" value="Genomic_DNA"/>
</dbReference>
<dbReference type="RefSeq" id="WP_011054855.1">
    <property type="nucleotide sequence ID" value="NC_004606.1"/>
</dbReference>
<dbReference type="SMR" id="P0DD23"/>
<dbReference type="KEGG" id="sps:SPs0457"/>
<dbReference type="HOGENOM" id="CLU_025400_0_2_9"/>
<dbReference type="UniPathway" id="UPA00098">
    <property type="reaction ID" value="UER00359"/>
</dbReference>
<dbReference type="GO" id="GO:0005829">
    <property type="term" value="C:cytosol"/>
    <property type="evidence" value="ECO:0007669"/>
    <property type="project" value="TreeGrafter"/>
</dbReference>
<dbReference type="GO" id="GO:0005524">
    <property type="term" value="F:ATP binding"/>
    <property type="evidence" value="ECO:0007669"/>
    <property type="project" value="UniProtKB-KW"/>
</dbReference>
<dbReference type="GO" id="GO:0004349">
    <property type="term" value="F:glutamate 5-kinase activity"/>
    <property type="evidence" value="ECO:0007669"/>
    <property type="project" value="UniProtKB-UniRule"/>
</dbReference>
<dbReference type="GO" id="GO:0055129">
    <property type="term" value="P:L-proline biosynthetic process"/>
    <property type="evidence" value="ECO:0007669"/>
    <property type="project" value="UniProtKB-UniRule"/>
</dbReference>
<dbReference type="CDD" id="cd04242">
    <property type="entry name" value="AAK_G5K_ProB"/>
    <property type="match status" value="1"/>
</dbReference>
<dbReference type="FunFam" id="3.40.1160.10:FF:000006">
    <property type="entry name" value="Glutamate 5-kinase"/>
    <property type="match status" value="1"/>
</dbReference>
<dbReference type="Gene3D" id="3.40.1160.10">
    <property type="entry name" value="Acetylglutamate kinase-like"/>
    <property type="match status" value="1"/>
</dbReference>
<dbReference type="HAMAP" id="MF_00456">
    <property type="entry name" value="ProB"/>
    <property type="match status" value="1"/>
</dbReference>
<dbReference type="InterPro" id="IPR036393">
    <property type="entry name" value="AceGlu_kinase-like_sf"/>
</dbReference>
<dbReference type="InterPro" id="IPR001048">
    <property type="entry name" value="Asp/Glu/Uridylate_kinase"/>
</dbReference>
<dbReference type="InterPro" id="IPR041739">
    <property type="entry name" value="G5K_ProB"/>
</dbReference>
<dbReference type="InterPro" id="IPR001057">
    <property type="entry name" value="Glu/AcGlu_kinase"/>
</dbReference>
<dbReference type="InterPro" id="IPR011529">
    <property type="entry name" value="Glu_5kinase"/>
</dbReference>
<dbReference type="InterPro" id="IPR005715">
    <property type="entry name" value="Glu_5kinase/COase_Synthase"/>
</dbReference>
<dbReference type="InterPro" id="IPR019797">
    <property type="entry name" value="Glutamate_5-kinase_CS"/>
</dbReference>
<dbReference type="NCBIfam" id="TIGR01027">
    <property type="entry name" value="proB"/>
    <property type="match status" value="1"/>
</dbReference>
<dbReference type="PANTHER" id="PTHR43654">
    <property type="entry name" value="GLUTAMATE 5-KINASE"/>
    <property type="match status" value="1"/>
</dbReference>
<dbReference type="PANTHER" id="PTHR43654:SF1">
    <property type="entry name" value="ISOPENTENYL PHOSPHATE KINASE"/>
    <property type="match status" value="1"/>
</dbReference>
<dbReference type="Pfam" id="PF00696">
    <property type="entry name" value="AA_kinase"/>
    <property type="match status" value="1"/>
</dbReference>
<dbReference type="PIRSF" id="PIRSF000729">
    <property type="entry name" value="GK"/>
    <property type="match status" value="1"/>
</dbReference>
<dbReference type="PRINTS" id="PR00474">
    <property type="entry name" value="GLU5KINASE"/>
</dbReference>
<dbReference type="SUPFAM" id="SSF53633">
    <property type="entry name" value="Carbamate kinase-like"/>
    <property type="match status" value="1"/>
</dbReference>
<dbReference type="PROSITE" id="PS00902">
    <property type="entry name" value="GLUTAMATE_5_KINASE"/>
    <property type="match status" value="1"/>
</dbReference>
<protein>
    <recommendedName>
        <fullName evidence="1">Glutamate 5-kinase</fullName>
        <ecNumber evidence="1">2.7.2.11</ecNumber>
    </recommendedName>
    <alternativeName>
        <fullName evidence="1">Gamma-glutamyl kinase</fullName>
        <shortName evidence="1">GK</shortName>
    </alternativeName>
</protein>
<accession>P0DD23</accession>
<accession>Q8K6C1</accession>
<keyword id="KW-0028">Amino-acid biosynthesis</keyword>
<keyword id="KW-0067">ATP-binding</keyword>
<keyword id="KW-0963">Cytoplasm</keyword>
<keyword id="KW-0418">Kinase</keyword>
<keyword id="KW-0547">Nucleotide-binding</keyword>
<keyword id="KW-0641">Proline biosynthesis</keyword>
<keyword id="KW-0808">Transferase</keyword>
<gene>
    <name evidence="1" type="primary">proB</name>
    <name type="ordered locus">SPs0457</name>
</gene>
<sequence length="273" mass="29763">MMKRQFEDVTRIVIKIGTSSLVLPTGKINLEKIDQLAFVISSLMNKGKEVILVSSGAMGFGLDILKMEKRPTNLAKQQAVSSVGQVAMMSLYSQIFAHYQTNVSQILLTRDVVVFPESLANVTNAFESLISFGIVPIVNENDAVSVDEMDHATKFGDNDRLSAVVAGITKADLLIMLSDIDGLFDKNPTIYEDAQLRSHVAVITQEIIASAGGAGSKFGTGGMLSKIQSAQMVFENKGQMVLMNGANPRDILRVLEGQPLGTWFKQIEEVRHD</sequence>